<feature type="chain" id="PRO_0000199874" description="Replication restart protein DnaT">
    <location>
        <begin position="1"/>
        <end position="179"/>
    </location>
</feature>
<feature type="region of interest" description="C-terminus">
    <location>
        <begin position="84"/>
        <end position="155"/>
    </location>
</feature>
<feature type="region of interest" description="Disordered" evidence="2">
    <location>
        <begin position="151"/>
        <end position="179"/>
    </location>
</feature>
<feature type="compositionally biased region" description="Polar residues" evidence="2">
    <location>
        <begin position="151"/>
        <end position="168"/>
    </location>
</feature>
<feature type="strand" evidence="6">
    <location>
        <begin position="86"/>
        <end position="90"/>
    </location>
</feature>
<feature type="helix" evidence="6">
    <location>
        <begin position="101"/>
        <end position="107"/>
    </location>
</feature>
<feature type="helix" evidence="6">
    <location>
        <begin position="118"/>
        <end position="131"/>
    </location>
</feature>
<feature type="helix" evidence="6">
    <location>
        <begin position="137"/>
        <end position="152"/>
    </location>
</feature>
<feature type="helix" evidence="6">
    <location>
        <begin position="153"/>
        <end position="155"/>
    </location>
</feature>
<dbReference type="EMBL" id="AE006468">
    <property type="protein sequence ID" value="AAL23362.1"/>
    <property type="molecule type" value="Genomic_DNA"/>
</dbReference>
<dbReference type="RefSeq" id="NP_463403.1">
    <property type="nucleotide sequence ID" value="NC_003197.2"/>
</dbReference>
<dbReference type="RefSeq" id="WP_000098578.1">
    <property type="nucleotide sequence ID" value="NC_003197.2"/>
</dbReference>
<dbReference type="PDB" id="6AEP">
    <property type="method" value="X-ray"/>
    <property type="resolution" value="1.84 A"/>
    <property type="chains" value="A/B=84-179"/>
</dbReference>
<dbReference type="PDB" id="6AEQ">
    <property type="method" value="X-ray"/>
    <property type="resolution" value="2.25 A"/>
    <property type="chains" value="A/B=84-179"/>
</dbReference>
<dbReference type="PDBsum" id="6AEP"/>
<dbReference type="PDBsum" id="6AEQ"/>
<dbReference type="SMR" id="P67524"/>
<dbReference type="STRING" id="99287.STM4544"/>
<dbReference type="PaxDb" id="99287-STM4544"/>
<dbReference type="GeneID" id="1256070"/>
<dbReference type="KEGG" id="stm:STM4544"/>
<dbReference type="PATRIC" id="fig|99287.12.peg.4788"/>
<dbReference type="HOGENOM" id="CLU_1501592_0_0_6"/>
<dbReference type="OMA" id="SFVAYWQ"/>
<dbReference type="PhylomeDB" id="P67524"/>
<dbReference type="BioCyc" id="SENT99287:STM4544-MONOMER"/>
<dbReference type="Proteomes" id="UP000001014">
    <property type="component" value="Chromosome"/>
</dbReference>
<dbReference type="GO" id="GO:1990077">
    <property type="term" value="C:primosome complex"/>
    <property type="evidence" value="ECO:0007669"/>
    <property type="project" value="UniProtKB-KW"/>
</dbReference>
<dbReference type="GO" id="GO:0006269">
    <property type="term" value="P:DNA replication, synthesis of primer"/>
    <property type="evidence" value="ECO:0007669"/>
    <property type="project" value="UniProtKB-UniRule"/>
</dbReference>
<dbReference type="Gene3D" id="1.10.8.1180">
    <property type="match status" value="1"/>
</dbReference>
<dbReference type="HAMAP" id="MF_01061">
    <property type="entry name" value="DnaT"/>
    <property type="match status" value="1"/>
</dbReference>
<dbReference type="InterPro" id="IPR020917">
    <property type="entry name" value="DnaT"/>
</dbReference>
<dbReference type="InterPro" id="IPR040480">
    <property type="entry name" value="DnaT_DNA_bind"/>
</dbReference>
<dbReference type="NCBIfam" id="NF002770">
    <property type="entry name" value="PRK02854.1"/>
    <property type="match status" value="1"/>
</dbReference>
<dbReference type="Pfam" id="PF17948">
    <property type="entry name" value="DnaT"/>
    <property type="match status" value="1"/>
</dbReference>
<organism>
    <name type="scientific">Salmonella typhimurium (strain LT2 / SGSC1412 / ATCC 700720)</name>
    <dbReference type="NCBI Taxonomy" id="99287"/>
    <lineage>
        <taxon>Bacteria</taxon>
        <taxon>Pseudomonadati</taxon>
        <taxon>Pseudomonadota</taxon>
        <taxon>Gammaproteobacteria</taxon>
        <taxon>Enterobacterales</taxon>
        <taxon>Enterobacteriaceae</taxon>
        <taxon>Salmonella</taxon>
    </lineage>
</organism>
<reference key="1">
    <citation type="journal article" date="2001" name="Nature">
        <title>Complete genome sequence of Salmonella enterica serovar Typhimurium LT2.</title>
        <authorList>
            <person name="McClelland M."/>
            <person name="Sanderson K.E."/>
            <person name="Spieth J."/>
            <person name="Clifton S.W."/>
            <person name="Latreille P."/>
            <person name="Courtney L."/>
            <person name="Porwollik S."/>
            <person name="Ali J."/>
            <person name="Dante M."/>
            <person name="Du F."/>
            <person name="Hou S."/>
            <person name="Layman D."/>
            <person name="Leonard S."/>
            <person name="Nguyen C."/>
            <person name="Scott K."/>
            <person name="Holmes A."/>
            <person name="Grewal N."/>
            <person name="Mulvaney E."/>
            <person name="Ryan E."/>
            <person name="Sun H."/>
            <person name="Florea L."/>
            <person name="Miller W."/>
            <person name="Stoneking T."/>
            <person name="Nhan M."/>
            <person name="Waterston R."/>
            <person name="Wilson R.K."/>
        </authorList>
    </citation>
    <scope>NUCLEOTIDE SEQUENCE [LARGE SCALE GENOMIC DNA]</scope>
    <source>
        <strain>LT2 / SGSC1412 / ATCC 700720</strain>
    </source>
</reference>
<reference evidence="4" key="2">
    <citation type="submission" date="2019-08" db="PDB data bank">
        <title>Crystal structure of the ssDNA-Binding domain of DnaT Salmonella enterica serovar typhimurium LT2 at 1.84 A resolution.</title>
        <authorList>
            <person name="Huang Y.H."/>
            <person name="Huang C.Y."/>
        </authorList>
    </citation>
    <scope>X-RAY CRYSTALLOGRAPHY (1.84 ANGSTROMS) OF 84-179</scope>
</reference>
<reference evidence="5" key="3">
    <citation type="journal article" date="2019" name="Biochem. Biophys. Res. Commun.">
        <title>Crystal structure of the C-terminal domain of the primosomal DnaT protein: Insights into a new oligomerization mechanism.</title>
        <authorList>
            <person name="Chen K.L."/>
            <person name="Huang Y.H."/>
            <person name="Liao J.F."/>
            <person name="Lee W.C."/>
            <person name="Huang C.Y."/>
        </authorList>
    </citation>
    <scope>X-RAY CRYSTALLOGRAPHY (2.25 ANGSTROMS) OF 84-179</scope>
    <scope>DOMAIN</scope>
    <source>
        <strain>LT2 / SGSC1412 / ATCC 700720</strain>
    </source>
</reference>
<comment type="function">
    <text evidence="1">Involved in the restart of stalled replication forks, which reloads the replicative helicase on sites other than the origin of replication. Can function in multiple replication restart pathways. Displaces ssDNA from a PriB-ssDNA complex. Probably forms a spiral filament on ssDNA.</text>
</comment>
<comment type="subunit">
    <text evidence="1">Homooligomerizes. Interacts with PriB. Component of the replication restart primosome. Primosome assembly occurs via a 'hand-off' mechanism. PriA binds to replication forks, subsequently PriB then DnaT bind; DnaT then displaces ssDNA to generate the helicase loading substrate.</text>
</comment>
<comment type="domain">
    <text evidence="3">The C-terminus (CT, residues 84-155) forms a 3-helix bundle.</text>
</comment>
<comment type="similarity">
    <text evidence="1">Belongs to the DnaT family.</text>
</comment>
<evidence type="ECO:0000255" key="1">
    <source>
        <dbReference type="HAMAP-Rule" id="MF_01061"/>
    </source>
</evidence>
<evidence type="ECO:0000256" key="2">
    <source>
        <dbReference type="SAM" id="MobiDB-lite"/>
    </source>
</evidence>
<evidence type="ECO:0000269" key="3">
    <source>
    </source>
</evidence>
<evidence type="ECO:0007744" key="4">
    <source>
        <dbReference type="PDB" id="6AEP"/>
    </source>
</evidence>
<evidence type="ECO:0007744" key="5">
    <source>
        <dbReference type="PDB" id="6AEQ"/>
    </source>
</evidence>
<evidence type="ECO:0007829" key="6">
    <source>
        <dbReference type="PDB" id="6AEP"/>
    </source>
</evidence>
<sequence length="179" mass="19506">MSSRILTSDVIGIDVLLHDHHAVLAKSTGGAVAVFANNAPAFYAVTPARMAELLALEEKLSRPGSDVALDAQFYEEPEAAPVAIPCGKFAMYPAWQPDADFQRQAALWGVALREPVTAEELAAFIAYWQAEGKVFHHIQWQQKLARSVQISRSSNGGMPQRDINSVSEPDNHIPPGFRG</sequence>
<protein>
    <recommendedName>
        <fullName evidence="1">Replication restart protein DnaT</fullName>
    </recommendedName>
</protein>
<keyword id="KW-0002">3D-structure</keyword>
<keyword id="KW-0235">DNA replication</keyword>
<keyword id="KW-0639">Primosome</keyword>
<keyword id="KW-1185">Reference proteome</keyword>
<gene>
    <name evidence="1" type="primary">dnaT</name>
    <name type="ordered locus">STM4544</name>
</gene>
<accession>P67524</accession>
<accession>Q8XGA9</accession>
<proteinExistence type="evidence at protein level"/>
<name>DNAT_SALTY</name>